<comment type="catalytic activity">
    <reaction>
        <text>alpha-D-glucose 6-phosphate = beta-D-fructose 6-phosphate</text>
        <dbReference type="Rhea" id="RHEA:11816"/>
        <dbReference type="ChEBI" id="CHEBI:57634"/>
        <dbReference type="ChEBI" id="CHEBI:58225"/>
        <dbReference type="EC" id="5.3.1.9"/>
    </reaction>
</comment>
<comment type="pathway">
    <text>Carbohydrate degradation; glycolysis; D-glyceraldehyde 3-phosphate and glycerone phosphate from D-glucose: step 2/4.</text>
</comment>
<comment type="subunit">
    <text>Homodimer.</text>
</comment>
<comment type="subcellular location">
    <subcellularLocation>
        <location>Glycosome</location>
    </subcellularLocation>
</comment>
<comment type="similarity">
    <text evidence="3">Belongs to the GPI family.</text>
</comment>
<keyword id="KW-0002">3D-structure</keyword>
<keyword id="KW-0903">Direct protein sequencing</keyword>
<keyword id="KW-0312">Gluconeogenesis</keyword>
<keyword id="KW-0324">Glycolysis</keyword>
<keyword id="KW-0327">Glycosome</keyword>
<keyword id="KW-0413">Isomerase</keyword>
<keyword id="KW-0576">Peroxisome</keyword>
<organism>
    <name type="scientific">Trypanosoma brucei brucei</name>
    <dbReference type="NCBI Taxonomy" id="5702"/>
    <lineage>
        <taxon>Eukaryota</taxon>
        <taxon>Discoba</taxon>
        <taxon>Euglenozoa</taxon>
        <taxon>Kinetoplastea</taxon>
        <taxon>Metakinetoplastina</taxon>
        <taxon>Trypanosomatida</taxon>
        <taxon>Trypanosomatidae</taxon>
        <taxon>Trypanosoma</taxon>
    </lineage>
</organism>
<name>G6PI_TRYBB</name>
<accession>P13377</accession>
<gene>
    <name type="primary">PGI</name>
</gene>
<sequence length="607" mass="67518">MSSYLDDLRIDLAASPASGGSASIAVGSFNIPYEVTRRLKGVGADADTTLTSCASWTQLQKLYEQYGDEPIKKHFEADSERGQRYSVKVSLGSKDENFLFLDYSKSHINDEIKCALLRLAEERGIRQFVQSVFRGERVNTTENRPVLHIALRNRSNRPIYVDGKDVMPAVNKVLDQMRSFSEKVRTGEWKGHTGKAIRHVVNIGIGGSDLGPVMATEALKPFSQRDLSLHFVSNVDGTHIAEVLKSIDIEATLFIVASKTFTTQETITNALSARRALLDYLRSRGIDEKGSVAKHFVALSTNNQKVKEFGIDEENMFQFWDWVGGRYSMWSAIGLPIMISIGYENFVELLTGAHVIDEHFANAPPEQNVPLLLALVGVWYINFFGAVTHAILPYDQYLWRLPAYLQQLDMESNGKYVTRSGKTVSTLTGPIIFGEAGTNGQHAFYQLIHQGTNLIPCDFIGAIQSQNKIGDHHKIFMSNFFAQTEALMIGKSPSEVRRELEAAGERSAEKINALLPHKTFIGGRPSNTLLIKSLTPRALGAIIAMYEHKVLVQGAIWGIDSYDQWGVELGKVLAKSILPQLRPGMRVNNHDSSTNGLINMFNELSHL</sequence>
<dbReference type="EC" id="5.3.1.9"/>
<dbReference type="EMBL" id="X15540">
    <property type="protein sequence ID" value="CAA33547.1"/>
    <property type="molecule type" value="Genomic_DNA"/>
</dbReference>
<dbReference type="PIR" id="S06113">
    <property type="entry name" value="NUUTB"/>
</dbReference>
<dbReference type="PDB" id="2O2C">
    <property type="method" value="X-ray"/>
    <property type="resolution" value="1.58 A"/>
    <property type="chains" value="A/B/C=1-607"/>
</dbReference>
<dbReference type="PDB" id="2O2D">
    <property type="method" value="X-ray"/>
    <property type="resolution" value="1.90 A"/>
    <property type="chains" value="A/B/C=1-607"/>
</dbReference>
<dbReference type="PDB" id="3CV0">
    <property type="method" value="X-ray"/>
    <property type="resolution" value="2.00 A"/>
    <property type="chains" value="B=601-607"/>
</dbReference>
<dbReference type="PDBsum" id="2O2C"/>
<dbReference type="PDBsum" id="2O2D"/>
<dbReference type="PDBsum" id="3CV0"/>
<dbReference type="SMR" id="P13377"/>
<dbReference type="BRENDA" id="5.3.1.9">
    <property type="organism ID" value="6520"/>
</dbReference>
<dbReference type="SABIO-RK" id="P13377"/>
<dbReference type="UniPathway" id="UPA00109">
    <property type="reaction ID" value="UER00181"/>
</dbReference>
<dbReference type="EvolutionaryTrace" id="P13377"/>
<dbReference type="GO" id="GO:0005829">
    <property type="term" value="C:cytosol"/>
    <property type="evidence" value="ECO:0007669"/>
    <property type="project" value="TreeGrafter"/>
</dbReference>
<dbReference type="GO" id="GO:0020015">
    <property type="term" value="C:glycosome"/>
    <property type="evidence" value="ECO:0007669"/>
    <property type="project" value="UniProtKB-SubCell"/>
</dbReference>
<dbReference type="GO" id="GO:0097367">
    <property type="term" value="F:carbohydrate derivative binding"/>
    <property type="evidence" value="ECO:0007669"/>
    <property type="project" value="InterPro"/>
</dbReference>
<dbReference type="GO" id="GO:0004347">
    <property type="term" value="F:glucose-6-phosphate isomerase activity"/>
    <property type="evidence" value="ECO:0007669"/>
    <property type="project" value="UniProtKB-EC"/>
</dbReference>
<dbReference type="GO" id="GO:0048029">
    <property type="term" value="F:monosaccharide binding"/>
    <property type="evidence" value="ECO:0007669"/>
    <property type="project" value="TreeGrafter"/>
</dbReference>
<dbReference type="GO" id="GO:0006094">
    <property type="term" value="P:gluconeogenesis"/>
    <property type="evidence" value="ECO:0007669"/>
    <property type="project" value="UniProtKB-KW"/>
</dbReference>
<dbReference type="GO" id="GO:0051156">
    <property type="term" value="P:glucose 6-phosphate metabolic process"/>
    <property type="evidence" value="ECO:0007669"/>
    <property type="project" value="TreeGrafter"/>
</dbReference>
<dbReference type="GO" id="GO:0006096">
    <property type="term" value="P:glycolytic process"/>
    <property type="evidence" value="ECO:0007669"/>
    <property type="project" value="UniProtKB-UniPathway"/>
</dbReference>
<dbReference type="CDD" id="cd05015">
    <property type="entry name" value="SIS_PGI_1"/>
    <property type="match status" value="1"/>
</dbReference>
<dbReference type="CDD" id="cd05016">
    <property type="entry name" value="SIS_PGI_2"/>
    <property type="match status" value="1"/>
</dbReference>
<dbReference type="FunFam" id="1.10.1390.10:FF:000001">
    <property type="entry name" value="Glucose-6-phosphate isomerase"/>
    <property type="match status" value="1"/>
</dbReference>
<dbReference type="FunFam" id="3.40.50.10490:FF:000004">
    <property type="entry name" value="Glucose-6-phosphate isomerase"/>
    <property type="match status" value="1"/>
</dbReference>
<dbReference type="Gene3D" id="1.10.1390.10">
    <property type="match status" value="1"/>
</dbReference>
<dbReference type="Gene3D" id="3.40.50.10490">
    <property type="entry name" value="Glucose-6-phosphate isomerase like protein, domain 1"/>
    <property type="match status" value="2"/>
</dbReference>
<dbReference type="HAMAP" id="MF_00473">
    <property type="entry name" value="G6P_isomerase"/>
    <property type="match status" value="1"/>
</dbReference>
<dbReference type="InterPro" id="IPR001672">
    <property type="entry name" value="G6P_Isomerase"/>
</dbReference>
<dbReference type="InterPro" id="IPR023096">
    <property type="entry name" value="G6P_Isomerase_C"/>
</dbReference>
<dbReference type="InterPro" id="IPR018189">
    <property type="entry name" value="Phosphoglucose_isomerase_CS"/>
</dbReference>
<dbReference type="InterPro" id="IPR046348">
    <property type="entry name" value="SIS_dom_sf"/>
</dbReference>
<dbReference type="InterPro" id="IPR035476">
    <property type="entry name" value="SIS_PGI_1"/>
</dbReference>
<dbReference type="InterPro" id="IPR035482">
    <property type="entry name" value="SIS_PGI_2"/>
</dbReference>
<dbReference type="NCBIfam" id="NF001211">
    <property type="entry name" value="PRK00179.1"/>
    <property type="match status" value="1"/>
</dbReference>
<dbReference type="PANTHER" id="PTHR11469">
    <property type="entry name" value="GLUCOSE-6-PHOSPHATE ISOMERASE"/>
    <property type="match status" value="1"/>
</dbReference>
<dbReference type="PANTHER" id="PTHR11469:SF1">
    <property type="entry name" value="GLUCOSE-6-PHOSPHATE ISOMERASE"/>
    <property type="match status" value="1"/>
</dbReference>
<dbReference type="Pfam" id="PF00342">
    <property type="entry name" value="PGI"/>
    <property type="match status" value="1"/>
</dbReference>
<dbReference type="PRINTS" id="PR00662">
    <property type="entry name" value="G6PISOMERASE"/>
</dbReference>
<dbReference type="SUPFAM" id="SSF53697">
    <property type="entry name" value="SIS domain"/>
    <property type="match status" value="1"/>
</dbReference>
<dbReference type="PROSITE" id="PS00765">
    <property type="entry name" value="P_GLUCOSE_ISOMERASE_1"/>
    <property type="match status" value="1"/>
</dbReference>
<dbReference type="PROSITE" id="PS00174">
    <property type="entry name" value="P_GLUCOSE_ISOMERASE_2"/>
    <property type="match status" value="1"/>
</dbReference>
<dbReference type="PROSITE" id="PS51463">
    <property type="entry name" value="P_GLUCOSE_ISOMERASE_3"/>
    <property type="match status" value="1"/>
</dbReference>
<feature type="chain" id="PRO_0000180548" description="Glucose-6-phosphate isomerase, glycosomal">
    <location>
        <begin position="1"/>
        <end position="607"/>
    </location>
</feature>
<feature type="short sequence motif" description="Microbody targeting signal" evidence="2">
    <location>
        <begin position="605"/>
        <end position="607"/>
    </location>
</feature>
<feature type="active site" description="Proton donor" evidence="1">
    <location>
        <position position="411"/>
    </location>
</feature>
<feature type="active site" evidence="1">
    <location>
        <position position="442"/>
    </location>
</feature>
<feature type="active site" evidence="1">
    <location>
        <position position="571"/>
    </location>
</feature>
<feature type="turn" evidence="4">
    <location>
        <begin position="49"/>
        <end position="52"/>
    </location>
</feature>
<feature type="helix" evidence="4">
    <location>
        <begin position="54"/>
        <end position="66"/>
    </location>
</feature>
<feature type="helix" evidence="4">
    <location>
        <begin position="71"/>
        <end position="77"/>
    </location>
</feature>
<feature type="helix" evidence="4">
    <location>
        <begin position="81"/>
        <end position="84"/>
    </location>
</feature>
<feature type="strand" evidence="4">
    <location>
        <begin position="86"/>
        <end position="90"/>
    </location>
</feature>
<feature type="strand" evidence="4">
    <location>
        <begin position="98"/>
        <end position="107"/>
    </location>
</feature>
<feature type="helix" evidence="4">
    <location>
        <begin position="110"/>
        <end position="122"/>
    </location>
</feature>
<feature type="helix" evidence="4">
    <location>
        <begin position="125"/>
        <end position="133"/>
    </location>
</feature>
<feature type="turn" evidence="4">
    <location>
        <begin position="140"/>
        <end position="143"/>
    </location>
</feature>
<feature type="helix" evidence="4">
    <location>
        <begin position="148"/>
        <end position="151"/>
    </location>
</feature>
<feature type="strand" evidence="4">
    <location>
        <begin position="164"/>
        <end position="166"/>
    </location>
</feature>
<feature type="helix" evidence="4">
    <location>
        <begin position="167"/>
        <end position="185"/>
    </location>
</feature>
<feature type="strand" evidence="4">
    <location>
        <begin position="199"/>
        <end position="203"/>
    </location>
</feature>
<feature type="helix" evidence="4">
    <location>
        <begin position="206"/>
        <end position="208"/>
    </location>
</feature>
<feature type="helix" evidence="4">
    <location>
        <begin position="210"/>
        <end position="218"/>
    </location>
</feature>
<feature type="helix" evidence="4">
    <location>
        <begin position="220"/>
        <end position="222"/>
    </location>
</feature>
<feature type="strand" evidence="4">
    <location>
        <begin position="227"/>
        <end position="232"/>
    </location>
</feature>
<feature type="helix" evidence="4">
    <location>
        <begin position="237"/>
        <end position="246"/>
    </location>
</feature>
<feature type="helix" evidence="4">
    <location>
        <begin position="249"/>
        <end position="251"/>
    </location>
</feature>
<feature type="strand" evidence="4">
    <location>
        <begin position="252"/>
        <end position="257"/>
    </location>
</feature>
<feature type="strand" evidence="4">
    <location>
        <begin position="259"/>
        <end position="261"/>
    </location>
</feature>
<feature type="helix" evidence="4">
    <location>
        <begin position="264"/>
        <end position="283"/>
    </location>
</feature>
<feature type="helix" evidence="4">
    <location>
        <begin position="292"/>
        <end position="295"/>
    </location>
</feature>
<feature type="strand" evidence="4">
    <location>
        <begin position="296"/>
        <end position="301"/>
    </location>
</feature>
<feature type="helix" evidence="4">
    <location>
        <begin position="303"/>
        <end position="309"/>
    </location>
</feature>
<feature type="helix" evidence="4">
    <location>
        <begin position="313"/>
        <end position="315"/>
    </location>
</feature>
<feature type="strand" evidence="4">
    <location>
        <begin position="316"/>
        <end position="318"/>
    </location>
</feature>
<feature type="helix" evidence="4">
    <location>
        <begin position="325"/>
        <end position="327"/>
    </location>
</feature>
<feature type="helix" evidence="4">
    <location>
        <begin position="332"/>
        <end position="334"/>
    </location>
</feature>
<feature type="helix" evidence="4">
    <location>
        <begin position="335"/>
        <end position="341"/>
    </location>
</feature>
<feature type="helix" evidence="4">
    <location>
        <begin position="343"/>
        <end position="362"/>
    </location>
</feature>
<feature type="helix" evidence="4">
    <location>
        <begin position="365"/>
        <end position="367"/>
    </location>
</feature>
<feature type="helix" evidence="4">
    <location>
        <begin position="369"/>
        <end position="382"/>
    </location>
</feature>
<feature type="strand" evidence="4">
    <location>
        <begin position="388"/>
        <end position="394"/>
    </location>
</feature>
<feature type="helix" evidence="4">
    <location>
        <begin position="396"/>
        <end position="398"/>
    </location>
</feature>
<feature type="helix" evidence="4">
    <location>
        <begin position="401"/>
        <end position="413"/>
    </location>
</feature>
<feature type="strand" evidence="4">
    <location>
        <begin position="431"/>
        <end position="433"/>
    </location>
</feature>
<feature type="helix" evidence="4">
    <location>
        <begin position="439"/>
        <end position="442"/>
    </location>
</feature>
<feature type="helix" evidence="4">
    <location>
        <begin position="445"/>
        <end position="450"/>
    </location>
</feature>
<feature type="strand" evidence="4">
    <location>
        <begin position="451"/>
        <end position="453"/>
    </location>
</feature>
<feature type="strand" evidence="4">
    <location>
        <begin position="457"/>
        <end position="464"/>
    </location>
</feature>
<feature type="helix" evidence="4">
    <location>
        <begin position="472"/>
        <end position="489"/>
    </location>
</feature>
<feature type="helix" evidence="4">
    <location>
        <begin position="493"/>
        <end position="502"/>
    </location>
</feature>
<feature type="helix" evidence="4">
    <location>
        <begin position="508"/>
        <end position="514"/>
    </location>
</feature>
<feature type="turn" evidence="4">
    <location>
        <begin position="515"/>
        <end position="518"/>
    </location>
</feature>
<feature type="strand" evidence="4">
    <location>
        <begin position="526"/>
        <end position="533"/>
    </location>
</feature>
<feature type="helix" evidence="4">
    <location>
        <begin position="536"/>
        <end position="557"/>
    </location>
</feature>
<feature type="helix" evidence="4">
    <location>
        <begin position="565"/>
        <end position="567"/>
    </location>
</feature>
<feature type="helix" evidence="4">
    <location>
        <begin position="568"/>
        <end position="577"/>
    </location>
</feature>
<feature type="helix" evidence="4">
    <location>
        <begin position="578"/>
        <end position="580"/>
    </location>
</feature>
<feature type="helix" evidence="4">
    <location>
        <begin position="592"/>
        <end position="604"/>
    </location>
</feature>
<reference key="1">
    <citation type="journal article" date="1989" name="Eur. J. Biochem.">
        <title>Glucosephosphate isomerase from Trypanosoma brucei. Cloning and characterization of the gene and analysis of the enzyme.</title>
        <authorList>
            <person name="Marchand M."/>
            <person name="Kooystra U."/>
            <person name="Wierenga R.K."/>
            <person name="Lambeir A.-M."/>
            <person name="van Beeumen J."/>
            <person name="Opperdoes F.R."/>
            <person name="Michels P.A.M."/>
        </authorList>
    </citation>
    <scope>NUCLEOTIDE SEQUENCE [GENOMIC DNA]</scope>
    <scope>PARTIAL PROTEIN SEQUENCE</scope>
    <source>
        <strain>427</strain>
    </source>
</reference>
<evidence type="ECO:0000250" key="1"/>
<evidence type="ECO:0000255" key="2"/>
<evidence type="ECO:0000305" key="3"/>
<evidence type="ECO:0007829" key="4">
    <source>
        <dbReference type="PDB" id="2O2C"/>
    </source>
</evidence>
<protein>
    <recommendedName>
        <fullName>Glucose-6-phosphate isomerase, glycosomal</fullName>
        <shortName>GPI</shortName>
        <ecNumber>5.3.1.9</ecNumber>
    </recommendedName>
    <alternativeName>
        <fullName>Phosphoglucose isomerase</fullName>
        <shortName>PGI</shortName>
    </alternativeName>
    <alternativeName>
        <fullName>Phosphohexose isomerase</fullName>
        <shortName>PHI</shortName>
    </alternativeName>
</protein>
<proteinExistence type="evidence at protein level"/>